<sequence length="242" mass="27293">MGQKIHPTGFRLGITQEHRSRWYADPKNYPDTLQEDHKIRQYVKATLANAGISQIRVERKAEQIDLEVRTARPGVVVGRGGAGIDSLRVGLQKLLGSNRQIRINVVEVTKVDTDAMLIGEYIAQQLEKRVSFRRVVRQAITRAQKAGVEGIKIQVSGRVNGAEIARTEVTREGSVPLHTLRANIDYAYCTAKTIYGILGIKIWVFKGEIIPGQEEIANAKVNQPKRRQQKRRQQYDDRSNEG</sequence>
<organism>
    <name type="scientific">Trichodesmium erythraeum (strain IMS101)</name>
    <dbReference type="NCBI Taxonomy" id="203124"/>
    <lineage>
        <taxon>Bacteria</taxon>
        <taxon>Bacillati</taxon>
        <taxon>Cyanobacteriota</taxon>
        <taxon>Cyanophyceae</taxon>
        <taxon>Oscillatoriophycideae</taxon>
        <taxon>Oscillatoriales</taxon>
        <taxon>Microcoleaceae</taxon>
        <taxon>Trichodesmium</taxon>
    </lineage>
</organism>
<keyword id="KW-0687">Ribonucleoprotein</keyword>
<keyword id="KW-0689">Ribosomal protein</keyword>
<keyword id="KW-0694">RNA-binding</keyword>
<keyword id="KW-0699">rRNA-binding</keyword>
<reference key="1">
    <citation type="journal article" date="2015" name="Proc. Natl. Acad. Sci. U.S.A.">
        <title>Trichodesmium genome maintains abundant, widespread noncoding DNA in situ, despite oligotrophic lifestyle.</title>
        <authorList>
            <person name="Walworth N."/>
            <person name="Pfreundt U."/>
            <person name="Nelson W.C."/>
            <person name="Mincer T."/>
            <person name="Heidelberg J.F."/>
            <person name="Fu F."/>
            <person name="Waterbury J.B."/>
            <person name="Glavina del Rio T."/>
            <person name="Goodwin L."/>
            <person name="Kyrpides N.C."/>
            <person name="Land M.L."/>
            <person name="Woyke T."/>
            <person name="Hutchins D.A."/>
            <person name="Hess W.R."/>
            <person name="Webb E.A."/>
        </authorList>
    </citation>
    <scope>NUCLEOTIDE SEQUENCE [LARGE SCALE GENOMIC DNA]</scope>
    <source>
        <strain>IMS101</strain>
    </source>
</reference>
<accession>Q110B3</accession>
<feature type="chain" id="PRO_0000293912" description="Small ribosomal subunit protein uS3">
    <location>
        <begin position="1"/>
        <end position="242"/>
    </location>
</feature>
<feature type="domain" description="KH type-2" evidence="1">
    <location>
        <begin position="39"/>
        <end position="109"/>
    </location>
</feature>
<feature type="region of interest" description="Disordered" evidence="2">
    <location>
        <begin position="220"/>
        <end position="242"/>
    </location>
</feature>
<feature type="compositionally biased region" description="Basic residues" evidence="2">
    <location>
        <begin position="223"/>
        <end position="232"/>
    </location>
</feature>
<feature type="compositionally biased region" description="Basic and acidic residues" evidence="2">
    <location>
        <begin position="233"/>
        <end position="242"/>
    </location>
</feature>
<comment type="function">
    <text evidence="1">Binds the lower part of the 30S subunit head. Binds mRNA in the 70S ribosome, positioning it for translation.</text>
</comment>
<comment type="subunit">
    <text evidence="1">Part of the 30S ribosomal subunit. Forms a tight complex with proteins S10 and S14.</text>
</comment>
<comment type="similarity">
    <text evidence="1">Belongs to the universal ribosomal protein uS3 family.</text>
</comment>
<dbReference type="EMBL" id="CP000393">
    <property type="protein sequence ID" value="ABG52161.1"/>
    <property type="molecule type" value="Genomic_DNA"/>
</dbReference>
<dbReference type="RefSeq" id="WP_011612516.1">
    <property type="nucleotide sequence ID" value="NC_008312.1"/>
</dbReference>
<dbReference type="SMR" id="Q110B3"/>
<dbReference type="STRING" id="203124.Tery_3006"/>
<dbReference type="KEGG" id="ter:Tery_3006"/>
<dbReference type="eggNOG" id="COG0092">
    <property type="taxonomic scope" value="Bacteria"/>
</dbReference>
<dbReference type="HOGENOM" id="CLU_058591_0_2_3"/>
<dbReference type="OrthoDB" id="9806396at2"/>
<dbReference type="GO" id="GO:0022627">
    <property type="term" value="C:cytosolic small ribosomal subunit"/>
    <property type="evidence" value="ECO:0007669"/>
    <property type="project" value="TreeGrafter"/>
</dbReference>
<dbReference type="GO" id="GO:0003729">
    <property type="term" value="F:mRNA binding"/>
    <property type="evidence" value="ECO:0007669"/>
    <property type="project" value="UniProtKB-UniRule"/>
</dbReference>
<dbReference type="GO" id="GO:0019843">
    <property type="term" value="F:rRNA binding"/>
    <property type="evidence" value="ECO:0007669"/>
    <property type="project" value="UniProtKB-UniRule"/>
</dbReference>
<dbReference type="GO" id="GO:0003735">
    <property type="term" value="F:structural constituent of ribosome"/>
    <property type="evidence" value="ECO:0007669"/>
    <property type="project" value="InterPro"/>
</dbReference>
<dbReference type="GO" id="GO:0006412">
    <property type="term" value="P:translation"/>
    <property type="evidence" value="ECO:0007669"/>
    <property type="project" value="UniProtKB-UniRule"/>
</dbReference>
<dbReference type="CDD" id="cd02412">
    <property type="entry name" value="KH-II_30S_S3"/>
    <property type="match status" value="1"/>
</dbReference>
<dbReference type="FunFam" id="3.30.300.20:FF:000001">
    <property type="entry name" value="30S ribosomal protein S3"/>
    <property type="match status" value="1"/>
</dbReference>
<dbReference type="Gene3D" id="3.30.300.20">
    <property type="match status" value="1"/>
</dbReference>
<dbReference type="Gene3D" id="3.30.1140.32">
    <property type="entry name" value="Ribosomal protein S3, C-terminal domain"/>
    <property type="match status" value="1"/>
</dbReference>
<dbReference type="HAMAP" id="MF_01309_B">
    <property type="entry name" value="Ribosomal_uS3_B"/>
    <property type="match status" value="1"/>
</dbReference>
<dbReference type="InterPro" id="IPR015946">
    <property type="entry name" value="KH_dom-like_a/b"/>
</dbReference>
<dbReference type="InterPro" id="IPR004044">
    <property type="entry name" value="KH_dom_type_2"/>
</dbReference>
<dbReference type="InterPro" id="IPR009019">
    <property type="entry name" value="KH_sf_prok-type"/>
</dbReference>
<dbReference type="InterPro" id="IPR036419">
    <property type="entry name" value="Ribosomal_S3_C_sf"/>
</dbReference>
<dbReference type="InterPro" id="IPR005704">
    <property type="entry name" value="Ribosomal_uS3_bac-typ"/>
</dbReference>
<dbReference type="InterPro" id="IPR001351">
    <property type="entry name" value="Ribosomal_uS3_C"/>
</dbReference>
<dbReference type="InterPro" id="IPR018280">
    <property type="entry name" value="Ribosomal_uS3_CS"/>
</dbReference>
<dbReference type="NCBIfam" id="TIGR01009">
    <property type="entry name" value="rpsC_bact"/>
    <property type="match status" value="1"/>
</dbReference>
<dbReference type="PANTHER" id="PTHR11760">
    <property type="entry name" value="30S/40S RIBOSOMAL PROTEIN S3"/>
    <property type="match status" value="1"/>
</dbReference>
<dbReference type="PANTHER" id="PTHR11760:SF19">
    <property type="entry name" value="SMALL RIBOSOMAL SUBUNIT PROTEIN US3C"/>
    <property type="match status" value="1"/>
</dbReference>
<dbReference type="Pfam" id="PF07650">
    <property type="entry name" value="KH_2"/>
    <property type="match status" value="1"/>
</dbReference>
<dbReference type="Pfam" id="PF00189">
    <property type="entry name" value="Ribosomal_S3_C"/>
    <property type="match status" value="1"/>
</dbReference>
<dbReference type="SUPFAM" id="SSF54814">
    <property type="entry name" value="Prokaryotic type KH domain (KH-domain type II)"/>
    <property type="match status" value="1"/>
</dbReference>
<dbReference type="SUPFAM" id="SSF54821">
    <property type="entry name" value="Ribosomal protein S3 C-terminal domain"/>
    <property type="match status" value="1"/>
</dbReference>
<dbReference type="PROSITE" id="PS50823">
    <property type="entry name" value="KH_TYPE_2"/>
    <property type="match status" value="1"/>
</dbReference>
<dbReference type="PROSITE" id="PS00548">
    <property type="entry name" value="RIBOSOMAL_S3"/>
    <property type="match status" value="1"/>
</dbReference>
<evidence type="ECO:0000255" key="1">
    <source>
        <dbReference type="HAMAP-Rule" id="MF_01309"/>
    </source>
</evidence>
<evidence type="ECO:0000256" key="2">
    <source>
        <dbReference type="SAM" id="MobiDB-lite"/>
    </source>
</evidence>
<evidence type="ECO:0000305" key="3"/>
<proteinExistence type="inferred from homology"/>
<name>RS3_TRIEI</name>
<protein>
    <recommendedName>
        <fullName evidence="1">Small ribosomal subunit protein uS3</fullName>
    </recommendedName>
    <alternativeName>
        <fullName evidence="3">30S ribosomal protein S3</fullName>
    </alternativeName>
</protein>
<gene>
    <name evidence="1" type="primary">rpsC</name>
    <name evidence="1" type="synonym">rps3</name>
    <name type="ordered locus">Tery_3006</name>
</gene>